<protein>
    <recommendedName>
        <fullName evidence="1">Triosephosphate isomerase</fullName>
        <shortName evidence="1">TIM</shortName>
        <shortName evidence="1">TPI</shortName>
        <ecNumber evidence="1">5.3.1.1</ecNumber>
    </recommendedName>
    <alternativeName>
        <fullName evidence="1">Triose-phosphate isomerase</fullName>
    </alternativeName>
</protein>
<proteinExistence type="inferred from homology"/>
<comment type="function">
    <text evidence="1">Involved in the gluconeogenesis. Catalyzes stereospecifically the conversion of dihydroxyacetone phosphate (DHAP) to D-glyceraldehyde-3-phosphate (G3P).</text>
</comment>
<comment type="catalytic activity">
    <reaction evidence="1">
        <text>D-glyceraldehyde 3-phosphate = dihydroxyacetone phosphate</text>
        <dbReference type="Rhea" id="RHEA:18585"/>
        <dbReference type="ChEBI" id="CHEBI:57642"/>
        <dbReference type="ChEBI" id="CHEBI:59776"/>
        <dbReference type="EC" id="5.3.1.1"/>
    </reaction>
</comment>
<comment type="pathway">
    <text evidence="1">Carbohydrate biosynthesis; gluconeogenesis.</text>
</comment>
<comment type="pathway">
    <text evidence="1">Carbohydrate degradation; glycolysis; D-glyceraldehyde 3-phosphate from glycerone phosphate: step 1/1.</text>
</comment>
<comment type="subunit">
    <text evidence="1">Homotetramer; dimer of dimers.</text>
</comment>
<comment type="subcellular location">
    <subcellularLocation>
        <location evidence="1">Cytoplasm</location>
    </subcellularLocation>
</comment>
<comment type="similarity">
    <text evidence="1">Belongs to the triosephosphate isomerase family.</text>
</comment>
<comment type="sequence caution" evidence="2">
    <conflict type="erroneous initiation">
        <sequence resource="EMBL-CDS" id="BAB60452"/>
    </conflict>
</comment>
<keyword id="KW-0963">Cytoplasm</keyword>
<keyword id="KW-0312">Gluconeogenesis</keyword>
<keyword id="KW-0324">Glycolysis</keyword>
<keyword id="KW-0413">Isomerase</keyword>
<accession>Q978V5</accession>
<gene>
    <name evidence="1" type="primary">tpiA</name>
    <name type="ordered locus">TV1310</name>
    <name type="ORF">TVG1351870</name>
</gene>
<organism>
    <name type="scientific">Thermoplasma volcanium (strain ATCC 51530 / DSM 4299 / JCM 9571 / NBRC 15438 / GSS1)</name>
    <dbReference type="NCBI Taxonomy" id="273116"/>
    <lineage>
        <taxon>Archaea</taxon>
        <taxon>Methanobacteriati</taxon>
        <taxon>Thermoplasmatota</taxon>
        <taxon>Thermoplasmata</taxon>
        <taxon>Thermoplasmatales</taxon>
        <taxon>Thermoplasmataceae</taxon>
        <taxon>Thermoplasma</taxon>
    </lineage>
</organism>
<evidence type="ECO:0000255" key="1">
    <source>
        <dbReference type="HAMAP-Rule" id="MF_00147"/>
    </source>
</evidence>
<evidence type="ECO:0000305" key="2"/>
<reference key="1">
    <citation type="journal article" date="2000" name="Proc. Natl. Acad. Sci. U.S.A.">
        <title>Archaeal adaptation to higher temperatures revealed by genomic sequence of Thermoplasma volcanium.</title>
        <authorList>
            <person name="Kawashima T."/>
            <person name="Amano N."/>
            <person name="Koike H."/>
            <person name="Makino S."/>
            <person name="Higuchi S."/>
            <person name="Kawashima-Ohya Y."/>
            <person name="Watanabe K."/>
            <person name="Yamazaki M."/>
            <person name="Kanehori K."/>
            <person name="Kawamoto T."/>
            <person name="Nunoshiba T."/>
            <person name="Yamamoto Y."/>
            <person name="Aramaki H."/>
            <person name="Makino K."/>
            <person name="Suzuki M."/>
        </authorList>
    </citation>
    <scope>NUCLEOTIDE SEQUENCE [LARGE SCALE GENOMIC DNA]</scope>
    <source>
        <strain>ATCC 51530 / DSM 4299 / JCM 9571 / NBRC 15438 / GSS1</strain>
    </source>
</reference>
<name>TPIS_THEVO</name>
<dbReference type="EC" id="5.3.1.1" evidence="1"/>
<dbReference type="EMBL" id="BA000011">
    <property type="protein sequence ID" value="BAB60452.1"/>
    <property type="status" value="ALT_INIT"/>
    <property type="molecule type" value="Genomic_DNA"/>
</dbReference>
<dbReference type="RefSeq" id="WP_010917545.1">
    <property type="nucleotide sequence ID" value="NC_002689.2"/>
</dbReference>
<dbReference type="SMR" id="Q978V5"/>
<dbReference type="STRING" id="273116.gene:9382118"/>
<dbReference type="PaxDb" id="273116-14325549"/>
<dbReference type="GeneID" id="1441427"/>
<dbReference type="KEGG" id="tvo:TVG1351870"/>
<dbReference type="eggNOG" id="arCOG01087">
    <property type="taxonomic scope" value="Archaea"/>
</dbReference>
<dbReference type="HOGENOM" id="CLU_104921_0_0_2"/>
<dbReference type="OrthoDB" id="9465at2157"/>
<dbReference type="PhylomeDB" id="Q978V5"/>
<dbReference type="UniPathway" id="UPA00109">
    <property type="reaction ID" value="UER00189"/>
</dbReference>
<dbReference type="UniPathway" id="UPA00138"/>
<dbReference type="Proteomes" id="UP000001017">
    <property type="component" value="Chromosome"/>
</dbReference>
<dbReference type="GO" id="GO:0005737">
    <property type="term" value="C:cytoplasm"/>
    <property type="evidence" value="ECO:0007669"/>
    <property type="project" value="UniProtKB-SubCell"/>
</dbReference>
<dbReference type="GO" id="GO:0004807">
    <property type="term" value="F:triose-phosphate isomerase activity"/>
    <property type="evidence" value="ECO:0007669"/>
    <property type="project" value="UniProtKB-UniRule"/>
</dbReference>
<dbReference type="GO" id="GO:0006094">
    <property type="term" value="P:gluconeogenesis"/>
    <property type="evidence" value="ECO:0007669"/>
    <property type="project" value="UniProtKB-UniRule"/>
</dbReference>
<dbReference type="GO" id="GO:0006096">
    <property type="term" value="P:glycolytic process"/>
    <property type="evidence" value="ECO:0007669"/>
    <property type="project" value="UniProtKB-UniRule"/>
</dbReference>
<dbReference type="CDD" id="cd00311">
    <property type="entry name" value="TIM"/>
    <property type="match status" value="1"/>
</dbReference>
<dbReference type="Gene3D" id="3.20.20.70">
    <property type="entry name" value="Aldolase class I"/>
    <property type="match status" value="1"/>
</dbReference>
<dbReference type="HAMAP" id="MF_00147_A">
    <property type="entry name" value="TIM_A"/>
    <property type="match status" value="1"/>
</dbReference>
<dbReference type="InterPro" id="IPR013785">
    <property type="entry name" value="Aldolase_TIM"/>
</dbReference>
<dbReference type="InterPro" id="IPR035990">
    <property type="entry name" value="TIM_sf"/>
</dbReference>
<dbReference type="InterPro" id="IPR000652">
    <property type="entry name" value="Triosephosphate_isomerase"/>
</dbReference>
<dbReference type="InterPro" id="IPR022891">
    <property type="entry name" value="Triosephosphate_isomerase_arc"/>
</dbReference>
<dbReference type="NCBIfam" id="NF003302">
    <property type="entry name" value="PRK04302.1"/>
    <property type="match status" value="1"/>
</dbReference>
<dbReference type="Pfam" id="PF00121">
    <property type="entry name" value="TIM"/>
    <property type="match status" value="1"/>
</dbReference>
<dbReference type="SUPFAM" id="SSF51351">
    <property type="entry name" value="Triosephosphate isomerase (TIM)"/>
    <property type="match status" value="1"/>
</dbReference>
<dbReference type="PROSITE" id="PS51440">
    <property type="entry name" value="TIM_2"/>
    <property type="match status" value="1"/>
</dbReference>
<sequence length="213" mass="23290">MFTVIVNLKNYAEANGKNFVEFVSKLPKYDSVRLIIAPAILDLHNAHEFRNVEFFSQHVDDVGYGPYTGHIAIESLMNYGIIGSLLNHSERRLGEDKIISTVKKAQMLGFEIALCVESMEEAKRYSALKPSFIAYEPKELIGGNVSVSTAKPEIISEIVDICGTEGVPVLVGAGIKNRQDVRKSLDLGAQGILVSSGVVKSPDPVRSLNSLIK</sequence>
<feature type="chain" id="PRO_0000090350" description="Triosephosphate isomerase">
    <location>
        <begin position="1"/>
        <end position="213"/>
    </location>
</feature>
<feature type="active site" description="Electrophile" evidence="1">
    <location>
        <position position="88"/>
    </location>
</feature>
<feature type="active site" description="Proton acceptor" evidence="1">
    <location>
        <position position="136"/>
    </location>
</feature>
<feature type="binding site" evidence="1">
    <location>
        <begin position="7"/>
        <end position="9"/>
    </location>
    <ligand>
        <name>substrate</name>
    </ligand>
</feature>
<feature type="binding site" evidence="1">
    <location>
        <position position="141"/>
    </location>
    <ligand>
        <name>substrate</name>
    </ligand>
</feature>
<feature type="binding site" evidence="1">
    <location>
        <position position="174"/>
    </location>
    <ligand>
        <name>substrate</name>
    </ligand>
</feature>